<feature type="chain" id="PRO_0000403555" description="Flap endonuclease 1">
    <location>
        <begin position="1"/>
        <end position="395"/>
    </location>
</feature>
<feature type="region of interest" description="N-domain">
    <location>
        <begin position="1"/>
        <end position="104"/>
    </location>
</feature>
<feature type="region of interest" description="I-domain">
    <location>
        <begin position="122"/>
        <end position="253"/>
    </location>
</feature>
<feature type="region of interest" description="Interaction with PCNA" evidence="1">
    <location>
        <begin position="341"/>
        <end position="349"/>
    </location>
</feature>
<feature type="region of interest" description="Disordered" evidence="2">
    <location>
        <begin position="360"/>
        <end position="395"/>
    </location>
</feature>
<feature type="compositionally biased region" description="Basic and acidic residues" evidence="2">
    <location>
        <begin position="360"/>
        <end position="389"/>
    </location>
</feature>
<feature type="binding site" evidence="1">
    <location>
        <position position="34"/>
    </location>
    <ligand>
        <name>Mg(2+)</name>
        <dbReference type="ChEBI" id="CHEBI:18420"/>
        <label>1</label>
    </ligand>
</feature>
<feature type="binding site" evidence="1">
    <location>
        <position position="47"/>
    </location>
    <ligand>
        <name>DNA</name>
        <dbReference type="ChEBI" id="CHEBI:16991"/>
    </ligand>
</feature>
<feature type="binding site" evidence="1">
    <location>
        <position position="70"/>
    </location>
    <ligand>
        <name>DNA</name>
        <dbReference type="ChEBI" id="CHEBI:16991"/>
    </ligand>
</feature>
<feature type="binding site" evidence="1">
    <location>
        <position position="86"/>
    </location>
    <ligand>
        <name>Mg(2+)</name>
        <dbReference type="ChEBI" id="CHEBI:18420"/>
        <label>1</label>
    </ligand>
</feature>
<feature type="binding site" evidence="1">
    <location>
        <position position="158"/>
    </location>
    <ligand>
        <name>DNA</name>
        <dbReference type="ChEBI" id="CHEBI:16991"/>
    </ligand>
</feature>
<feature type="binding site" evidence="1">
    <location>
        <position position="158"/>
    </location>
    <ligand>
        <name>Mg(2+)</name>
        <dbReference type="ChEBI" id="CHEBI:18420"/>
        <label>1</label>
    </ligand>
</feature>
<feature type="binding site" evidence="1">
    <location>
        <position position="160"/>
    </location>
    <ligand>
        <name>Mg(2+)</name>
        <dbReference type="ChEBI" id="CHEBI:18420"/>
        <label>1</label>
    </ligand>
</feature>
<feature type="binding site" evidence="1">
    <location>
        <position position="179"/>
    </location>
    <ligand>
        <name>Mg(2+)</name>
        <dbReference type="ChEBI" id="CHEBI:18420"/>
        <label>2</label>
    </ligand>
</feature>
<feature type="binding site" evidence="1">
    <location>
        <position position="181"/>
    </location>
    <ligand>
        <name>Mg(2+)</name>
        <dbReference type="ChEBI" id="CHEBI:18420"/>
        <label>2</label>
    </ligand>
</feature>
<feature type="binding site" evidence="1">
    <location>
        <position position="231"/>
    </location>
    <ligand>
        <name>DNA</name>
        <dbReference type="ChEBI" id="CHEBI:16991"/>
    </ligand>
</feature>
<feature type="binding site" evidence="1">
    <location>
        <position position="233"/>
    </location>
    <ligand>
        <name>DNA</name>
        <dbReference type="ChEBI" id="CHEBI:16991"/>
    </ligand>
</feature>
<feature type="binding site" evidence="1">
    <location>
        <position position="233"/>
    </location>
    <ligand>
        <name>Mg(2+)</name>
        <dbReference type="ChEBI" id="CHEBI:18420"/>
        <label>2</label>
    </ligand>
</feature>
<proteinExistence type="inferred from homology"/>
<evidence type="ECO:0000255" key="1">
    <source>
        <dbReference type="HAMAP-Rule" id="MF_03140"/>
    </source>
</evidence>
<evidence type="ECO:0000256" key="2">
    <source>
        <dbReference type="SAM" id="MobiDB-lite"/>
    </source>
</evidence>
<evidence type="ECO:0000305" key="3"/>
<protein>
    <recommendedName>
        <fullName evidence="1">Flap endonuclease 1</fullName>
        <shortName evidence="1">FEN-1</shortName>
        <ecNumber evidence="1">3.1.-.-</ecNumber>
    </recommendedName>
    <alternativeName>
        <fullName evidence="1">Flap structure-specific endonuclease 1</fullName>
    </alternativeName>
</protein>
<reference key="1">
    <citation type="submission" date="2009-05" db="EMBL/GenBank/DDBJ databases">
        <title>The genome sequence of Ajellomyces capsulatus strain H143.</title>
        <authorList>
            <person name="Champion M."/>
            <person name="Cuomo C.A."/>
            <person name="Ma L.-J."/>
            <person name="Henn M.R."/>
            <person name="Sil A."/>
            <person name="Goldman B."/>
            <person name="Young S.K."/>
            <person name="Kodira C.D."/>
            <person name="Zeng Q."/>
            <person name="Koehrsen M."/>
            <person name="Alvarado L."/>
            <person name="Berlin A.M."/>
            <person name="Borenstein D."/>
            <person name="Chen Z."/>
            <person name="Engels R."/>
            <person name="Freedman E."/>
            <person name="Gellesch M."/>
            <person name="Goldberg J."/>
            <person name="Griggs A."/>
            <person name="Gujja S."/>
            <person name="Heiman D.I."/>
            <person name="Hepburn T.A."/>
            <person name="Howarth C."/>
            <person name="Jen D."/>
            <person name="Larson L."/>
            <person name="Lewis B."/>
            <person name="Mehta T."/>
            <person name="Park D."/>
            <person name="Pearson M."/>
            <person name="Roberts A."/>
            <person name="Saif S."/>
            <person name="Shea T.D."/>
            <person name="Shenoy N."/>
            <person name="Sisk P."/>
            <person name="Stolte C."/>
            <person name="Sykes S."/>
            <person name="Walk T."/>
            <person name="White J."/>
            <person name="Yandava C."/>
            <person name="Klein B."/>
            <person name="McEwen J.G."/>
            <person name="Puccia R."/>
            <person name="Goldman G.H."/>
            <person name="Felipe M.S."/>
            <person name="Nino-Vega G."/>
            <person name="San-Blas G."/>
            <person name="Taylor J.W."/>
            <person name="Mendoza L."/>
            <person name="Galagan J.E."/>
            <person name="Nusbaum C."/>
            <person name="Birren B.W."/>
        </authorList>
    </citation>
    <scope>NUCLEOTIDE SEQUENCE [LARGE SCALE GENOMIC DNA]</scope>
    <source>
        <strain>H143</strain>
    </source>
</reference>
<keyword id="KW-0227">DNA damage</keyword>
<keyword id="KW-0234">DNA repair</keyword>
<keyword id="KW-0235">DNA replication</keyword>
<keyword id="KW-0255">Endonuclease</keyword>
<keyword id="KW-0269">Exonuclease</keyword>
<keyword id="KW-0378">Hydrolase</keyword>
<keyword id="KW-0460">Magnesium</keyword>
<keyword id="KW-0479">Metal-binding</keyword>
<keyword id="KW-0496">Mitochondrion</keyword>
<keyword id="KW-0540">Nuclease</keyword>
<keyword id="KW-0539">Nucleus</keyword>
<keyword id="KW-0597">Phosphoprotein</keyword>
<keyword id="KW-1185">Reference proteome</keyword>
<accession>C6HQJ2</accession>
<organism>
    <name type="scientific">Ajellomyces capsulatus (strain H143)</name>
    <name type="common">Darling's disease fungus</name>
    <name type="synonym">Histoplasma capsulatum</name>
    <dbReference type="NCBI Taxonomy" id="544712"/>
    <lineage>
        <taxon>Eukaryota</taxon>
        <taxon>Fungi</taxon>
        <taxon>Dikarya</taxon>
        <taxon>Ascomycota</taxon>
        <taxon>Pezizomycotina</taxon>
        <taxon>Eurotiomycetes</taxon>
        <taxon>Eurotiomycetidae</taxon>
        <taxon>Onygenales</taxon>
        <taxon>Ajellomycetaceae</taxon>
        <taxon>Histoplasma</taxon>
    </lineage>
</organism>
<dbReference type="EC" id="3.1.-.-" evidence="1"/>
<dbReference type="EMBL" id="GG692435">
    <property type="protein sequence ID" value="EER37459.1"/>
    <property type="status" value="ALT_SEQ"/>
    <property type="molecule type" value="Genomic_DNA"/>
</dbReference>
<dbReference type="SMR" id="C6HQJ2"/>
<dbReference type="STRING" id="544712.C6HQJ2"/>
<dbReference type="eggNOG" id="KOG2519">
    <property type="taxonomic scope" value="Eukaryota"/>
</dbReference>
<dbReference type="HOGENOM" id="CLU_032444_1_1_1"/>
<dbReference type="OrthoDB" id="1105at299071"/>
<dbReference type="Proteomes" id="UP000002624">
    <property type="component" value="Unassembled WGS sequence"/>
</dbReference>
<dbReference type="GO" id="GO:0005739">
    <property type="term" value="C:mitochondrion"/>
    <property type="evidence" value="ECO:0007669"/>
    <property type="project" value="UniProtKB-SubCell"/>
</dbReference>
<dbReference type="GO" id="GO:0005730">
    <property type="term" value="C:nucleolus"/>
    <property type="evidence" value="ECO:0007669"/>
    <property type="project" value="UniProtKB-SubCell"/>
</dbReference>
<dbReference type="GO" id="GO:0005654">
    <property type="term" value="C:nucleoplasm"/>
    <property type="evidence" value="ECO:0007669"/>
    <property type="project" value="UniProtKB-SubCell"/>
</dbReference>
<dbReference type="GO" id="GO:0008409">
    <property type="term" value="F:5'-3' exonuclease activity"/>
    <property type="evidence" value="ECO:0007669"/>
    <property type="project" value="UniProtKB-UniRule"/>
</dbReference>
<dbReference type="GO" id="GO:0017108">
    <property type="term" value="F:5'-flap endonuclease activity"/>
    <property type="evidence" value="ECO:0007669"/>
    <property type="project" value="UniProtKB-UniRule"/>
</dbReference>
<dbReference type="GO" id="GO:0003677">
    <property type="term" value="F:DNA binding"/>
    <property type="evidence" value="ECO:0007669"/>
    <property type="project" value="UniProtKB-UniRule"/>
</dbReference>
<dbReference type="GO" id="GO:0000287">
    <property type="term" value="F:magnesium ion binding"/>
    <property type="evidence" value="ECO:0007669"/>
    <property type="project" value="UniProtKB-UniRule"/>
</dbReference>
<dbReference type="GO" id="GO:0006284">
    <property type="term" value="P:base-excision repair"/>
    <property type="evidence" value="ECO:0007669"/>
    <property type="project" value="UniProtKB-UniRule"/>
</dbReference>
<dbReference type="GO" id="GO:0043137">
    <property type="term" value="P:DNA replication, removal of RNA primer"/>
    <property type="evidence" value="ECO:0007669"/>
    <property type="project" value="UniProtKB-UniRule"/>
</dbReference>
<dbReference type="CDD" id="cd09907">
    <property type="entry name" value="H3TH_FEN1-Euk"/>
    <property type="match status" value="1"/>
</dbReference>
<dbReference type="CDD" id="cd09867">
    <property type="entry name" value="PIN_FEN1"/>
    <property type="match status" value="1"/>
</dbReference>
<dbReference type="FunFam" id="1.10.150.20:FF:000009">
    <property type="entry name" value="Flap endonuclease 1"/>
    <property type="match status" value="1"/>
</dbReference>
<dbReference type="FunFam" id="3.40.50.1010:FF:000003">
    <property type="entry name" value="Flap endonuclease 1"/>
    <property type="match status" value="1"/>
</dbReference>
<dbReference type="Gene3D" id="1.10.150.20">
    <property type="entry name" value="5' to 3' exonuclease, C-terminal subdomain"/>
    <property type="match status" value="1"/>
</dbReference>
<dbReference type="Gene3D" id="3.40.50.1010">
    <property type="entry name" value="5'-nuclease"/>
    <property type="match status" value="1"/>
</dbReference>
<dbReference type="HAMAP" id="MF_00614">
    <property type="entry name" value="Fen"/>
    <property type="match status" value="1"/>
</dbReference>
<dbReference type="InterPro" id="IPR036279">
    <property type="entry name" value="5-3_exonuclease_C_sf"/>
</dbReference>
<dbReference type="InterPro" id="IPR023426">
    <property type="entry name" value="Flap_endonuc"/>
</dbReference>
<dbReference type="InterPro" id="IPR008918">
    <property type="entry name" value="HhH2"/>
</dbReference>
<dbReference type="InterPro" id="IPR029060">
    <property type="entry name" value="PIN-like_dom_sf"/>
</dbReference>
<dbReference type="InterPro" id="IPR006086">
    <property type="entry name" value="XPG-I_dom"/>
</dbReference>
<dbReference type="InterPro" id="IPR006084">
    <property type="entry name" value="XPG/Rad2"/>
</dbReference>
<dbReference type="InterPro" id="IPR019974">
    <property type="entry name" value="XPG_CS"/>
</dbReference>
<dbReference type="InterPro" id="IPR006085">
    <property type="entry name" value="XPG_DNA_repair_N"/>
</dbReference>
<dbReference type="PANTHER" id="PTHR11081:SF9">
    <property type="entry name" value="FLAP ENDONUCLEASE 1"/>
    <property type="match status" value="1"/>
</dbReference>
<dbReference type="PANTHER" id="PTHR11081">
    <property type="entry name" value="FLAP ENDONUCLEASE FAMILY MEMBER"/>
    <property type="match status" value="1"/>
</dbReference>
<dbReference type="Pfam" id="PF00867">
    <property type="entry name" value="XPG_I"/>
    <property type="match status" value="1"/>
</dbReference>
<dbReference type="Pfam" id="PF00752">
    <property type="entry name" value="XPG_N"/>
    <property type="match status" value="1"/>
</dbReference>
<dbReference type="PRINTS" id="PR00853">
    <property type="entry name" value="XPGRADSUPER"/>
</dbReference>
<dbReference type="SMART" id="SM00279">
    <property type="entry name" value="HhH2"/>
    <property type="match status" value="1"/>
</dbReference>
<dbReference type="SMART" id="SM00484">
    <property type="entry name" value="XPGI"/>
    <property type="match status" value="1"/>
</dbReference>
<dbReference type="SMART" id="SM00485">
    <property type="entry name" value="XPGN"/>
    <property type="match status" value="1"/>
</dbReference>
<dbReference type="SUPFAM" id="SSF47807">
    <property type="entry name" value="5' to 3' exonuclease, C-terminal subdomain"/>
    <property type="match status" value="1"/>
</dbReference>
<dbReference type="SUPFAM" id="SSF88723">
    <property type="entry name" value="PIN domain-like"/>
    <property type="match status" value="1"/>
</dbReference>
<dbReference type="PROSITE" id="PS00841">
    <property type="entry name" value="XPG_1"/>
    <property type="match status" value="1"/>
</dbReference>
<dbReference type="PROSITE" id="PS00842">
    <property type="entry name" value="XPG_2"/>
    <property type="match status" value="1"/>
</dbReference>
<comment type="function">
    <text evidence="1">Structure-specific nuclease with 5'-flap endonuclease and 5'-3' exonuclease activities involved in DNA replication and repair. During DNA replication, cleaves the 5'-overhanging flap structure that is generated by displacement synthesis when DNA polymerase encounters the 5'-end of a downstream Okazaki fragment. It enters the flap from the 5'-end and then tracks to cleave the flap base, leaving a nick for ligation. Also involved in the long patch base excision repair (LP-BER) pathway, by cleaving within the apurinic/apyrimidinic (AP) site-terminated flap. Acts as a genome stabilization factor that prevents flaps from equilibrating into structures that lead to duplications and deletions. Also possesses 5'-3' exonuclease activity on nicked or gapped double-stranded DNA, and exhibits RNase H activity. Also involved in replication and repair of rDNA and in repairing mitochondrial DNA.</text>
</comment>
<comment type="cofactor">
    <cofactor evidence="1">
        <name>Mg(2+)</name>
        <dbReference type="ChEBI" id="CHEBI:18420"/>
    </cofactor>
    <text evidence="1">Binds 2 magnesium ions per subunit. They probably participate in the reaction catalyzed by the enzyme. May bind an additional third magnesium ion after substrate binding.</text>
</comment>
<comment type="subunit">
    <text evidence="1">Interacts with PCNA. Three molecules of FEN1 bind to one PCNA trimer with each molecule binding to one PCNA monomer. PCNA stimulates the nuclease activity without altering cleavage specificity.</text>
</comment>
<comment type="subcellular location">
    <subcellularLocation>
        <location evidence="1">Nucleus</location>
        <location evidence="1">Nucleolus</location>
    </subcellularLocation>
    <subcellularLocation>
        <location evidence="1">Nucleus</location>
        <location evidence="1">Nucleoplasm</location>
    </subcellularLocation>
    <subcellularLocation>
        <location evidence="1">Mitochondrion</location>
    </subcellularLocation>
    <text evidence="1">Resides mostly in the nucleoli and relocalizes to the nucleoplasm upon DNA damage.</text>
</comment>
<comment type="PTM">
    <text evidence="1">Phosphorylated. Phosphorylation upon DNA damage induces relocalization to the nuclear plasma.</text>
</comment>
<comment type="similarity">
    <text evidence="1">Belongs to the XPG/RAD2 endonuclease family. FEN1 subfamily.</text>
</comment>
<comment type="sequence caution" evidence="3">
    <conflict type="erroneous gene model prediction">
        <sequence resource="EMBL-CDS" id="EER37459"/>
    </conflict>
</comment>
<name>FEN1_AJECH</name>
<sequence>MGIKHLYQIIQENAPDAVKAGEIKNHFGRKVAIDASMSIYSFLIAVRSDGQQLTSETGETTSHLMGMFYRTLRIVDNGIKPVYVFDGAPPKLKSGELAKRFMRKSEAAEAHEEAKEVGTAEEVEKFSRRTVRVTREHNEECKKLLKLMGVPYIDAPTEAEAQCAVLARAGKVYAAASEDMDTLCFDSPILLRHLTFSEQRKEPILEIHLDRVLEGLDMDRKQFVDLCILLGCDYLDPIPKVGPNTALKLIRDHGSLEQVVEAIKSDPKKKYTIPEDWPYKEARELFFDPDVRNADHPDCDFKWEAPDVEGLVKFLVEEKAFSEDRVRNAAARLQKNLKTAQQSRLEGFFKPIAKTEQEKAVLKRKHEEKLELQKKKKKEDSKAKKEAKSKPRGTT</sequence>
<gene>
    <name evidence="1" type="primary">FEN1</name>
    <name type="ORF">HCDG_08910</name>
</gene>